<comment type="function">
    <text evidence="1 2 7 9 10 11 12 13 14 15 16 17">RNA-binding protein that acts as a regulator of mRNA splicing of a subset of genes encoding key structural proteins involved in cardiac development, such as TTN (Titin), CACNA1C, CAMK2D or PDLIM5/ENH (PubMed:22466703, PubMed:24584570, PubMed:27630136, PubMed:29650543, PubMed:29895960, PubMed:33110103, PubMed:35041844, PubMed:35394688). Acts as a repressor of mRNA splicing: specifically binds the 5'UCUU-3' motif that is predominantly found within intronic sequences of pre-mRNAs, leading to the exclusion of specific exons in target transcripts (PubMed:32187365). RBM20-mediated exon skipping is hormone-dependent and is essential for TTN isoform transition in both cardiac and skeletal muscles (PubMed:27630136, PubMed:29895960, PubMed:33110103, PubMed:35041844). RBM20-mediated exon skipping of TTN provides substrates for the formation of circular RNA (circRNAs) from the TTN transcripts (PubMed:37272356). Together with RBM24, promotes the expression of short isoforms of PDLIM5/ENH in cardiomyocytes (By similarity).</text>
</comment>
<comment type="subunit">
    <text evidence="2">Associates with components of the U1 and U2 U1 small nuclear ribonucleoprotein complexes.</text>
</comment>
<comment type="subcellular location">
    <subcellularLocation>
        <location evidence="7 8 12 14 15 16">Nucleus</location>
    </subcellularLocation>
    <subcellularLocation>
        <location evidence="15 16">Cytoplasm</location>
        <location evidence="15 16">Cytoplasmic ribonucleoprotein granule</location>
    </subcellularLocation>
    <text evidence="12 16">The active form that regulates alternative splicing localizes to the nucleus (PubMed:35394688). Also localizes to cytoplasmic ribonucleoprotein granules; localization to cytoplasmic ribonucleoprotein granules plays an important regulatory role (PubMed:35394688). Subcellular localization is regulated by phosphorylation of different parts of the protein: while phosphorylation of the RS (arginine/serine-rich) region promotes nuclear localization, phosphorylation of the C-terminal disordered region promotes localization to cytoplasmic ribonucleoprotein granules (PubMed:29895960, PubMed:35394688).</text>
</comment>
<comment type="alternative products">
    <event type="alternative splicing"/>
    <isoform>
        <id>Q3UQS8-1</id>
        <name>1</name>
        <sequence type="displayed"/>
    </isoform>
    <isoform>
        <id>Q3UQS8-2</id>
        <name>2</name>
        <sequence type="described" ref="VSP_044393"/>
    </isoform>
</comment>
<comment type="tissue specificity">
    <text evidence="7 8">Predominantly expressed in striated muscle, with highest expression in the heart (PubMed:22466703, PubMed:23886709). In differentiating myoblasts, expression correlates with sarcomere assembly: expression peaks when alpha-actinin is localized mainly in mature Z bodies within the nascent myofiber and expression declines as the sarcomeres continue to mature (PubMed:22466703). Also expressed in kidney (PubMed:23886709).</text>
</comment>
<comment type="induction">
    <text evidence="9">During early embryonic cardiogenesis.</text>
</comment>
<comment type="PTM">
    <text evidence="2 12 16">Phosphorylation regulates the subcellular localization. Phosphorylation of Ser-637 and Ser-639 in the RS (arginine/serine-rich) region promotes nuclear localization of the protein (PubMed:29895960, PubMed:35394688). In contrast, phosphorylation of the C-terminal disordered region promotes localization to cytoplasmic ribonucleoprotein granules (By similarity).</text>
</comment>
<comment type="disruption phenotype">
    <text evidence="11">Mice were born in normal Mendelian ratios, are viable, and do not exhibit any visible phenotype (PubMed:29650543). They however develop cardiomyopathy and display splicing defects in genes related to calcium handling such as CAMK2D or RYR2 (PubMed:29650543).</text>
</comment>
<comment type="sequence caution" evidence="20">
    <conflict type="erroneous initiation">
        <sequence resource="EMBL-CDS" id="AAH38663"/>
    </conflict>
    <text>Extended N-terminus.</text>
</comment>
<reference key="1">
    <citation type="journal article" date="2009" name="PLoS Biol.">
        <title>Lineage-specific biology revealed by a finished genome assembly of the mouse.</title>
        <authorList>
            <person name="Church D.M."/>
            <person name="Goodstadt L."/>
            <person name="Hillier L.W."/>
            <person name="Zody M.C."/>
            <person name="Goldstein S."/>
            <person name="She X."/>
            <person name="Bult C.J."/>
            <person name="Agarwala R."/>
            <person name="Cherry J.L."/>
            <person name="DiCuccio M."/>
            <person name="Hlavina W."/>
            <person name="Kapustin Y."/>
            <person name="Meric P."/>
            <person name="Maglott D."/>
            <person name="Birtle Z."/>
            <person name="Marques A.C."/>
            <person name="Graves T."/>
            <person name="Zhou S."/>
            <person name="Teague B."/>
            <person name="Potamousis K."/>
            <person name="Churas C."/>
            <person name="Place M."/>
            <person name="Herschleb J."/>
            <person name="Runnheim R."/>
            <person name="Forrest D."/>
            <person name="Amos-Landgraf J."/>
            <person name="Schwartz D.C."/>
            <person name="Cheng Z."/>
            <person name="Lindblad-Toh K."/>
            <person name="Eichler E.E."/>
            <person name="Ponting C.P."/>
        </authorList>
    </citation>
    <scope>NUCLEOTIDE SEQUENCE [LARGE SCALE GENOMIC DNA]</scope>
    <source>
        <strain>C57BL/6J</strain>
    </source>
</reference>
<reference key="2">
    <citation type="journal article" date="2005" name="Science">
        <title>The transcriptional landscape of the mammalian genome.</title>
        <authorList>
            <person name="Carninci P."/>
            <person name="Kasukawa T."/>
            <person name="Katayama S."/>
            <person name="Gough J."/>
            <person name="Frith M.C."/>
            <person name="Maeda N."/>
            <person name="Oyama R."/>
            <person name="Ravasi T."/>
            <person name="Lenhard B."/>
            <person name="Wells C."/>
            <person name="Kodzius R."/>
            <person name="Shimokawa K."/>
            <person name="Bajic V.B."/>
            <person name="Brenner S.E."/>
            <person name="Batalov S."/>
            <person name="Forrest A.R."/>
            <person name="Zavolan M."/>
            <person name="Davis M.J."/>
            <person name="Wilming L.G."/>
            <person name="Aidinis V."/>
            <person name="Allen J.E."/>
            <person name="Ambesi-Impiombato A."/>
            <person name="Apweiler R."/>
            <person name="Aturaliya R.N."/>
            <person name="Bailey T.L."/>
            <person name="Bansal M."/>
            <person name="Baxter L."/>
            <person name="Beisel K.W."/>
            <person name="Bersano T."/>
            <person name="Bono H."/>
            <person name="Chalk A.M."/>
            <person name="Chiu K.P."/>
            <person name="Choudhary V."/>
            <person name="Christoffels A."/>
            <person name="Clutterbuck D.R."/>
            <person name="Crowe M.L."/>
            <person name="Dalla E."/>
            <person name="Dalrymple B.P."/>
            <person name="de Bono B."/>
            <person name="Della Gatta G."/>
            <person name="di Bernardo D."/>
            <person name="Down T."/>
            <person name="Engstrom P."/>
            <person name="Fagiolini M."/>
            <person name="Faulkner G."/>
            <person name="Fletcher C.F."/>
            <person name="Fukushima T."/>
            <person name="Furuno M."/>
            <person name="Futaki S."/>
            <person name="Gariboldi M."/>
            <person name="Georgii-Hemming P."/>
            <person name="Gingeras T.R."/>
            <person name="Gojobori T."/>
            <person name="Green R.E."/>
            <person name="Gustincich S."/>
            <person name="Harbers M."/>
            <person name="Hayashi Y."/>
            <person name="Hensch T.K."/>
            <person name="Hirokawa N."/>
            <person name="Hill D."/>
            <person name="Huminiecki L."/>
            <person name="Iacono M."/>
            <person name="Ikeo K."/>
            <person name="Iwama A."/>
            <person name="Ishikawa T."/>
            <person name="Jakt M."/>
            <person name="Kanapin A."/>
            <person name="Katoh M."/>
            <person name="Kawasawa Y."/>
            <person name="Kelso J."/>
            <person name="Kitamura H."/>
            <person name="Kitano H."/>
            <person name="Kollias G."/>
            <person name="Krishnan S.P."/>
            <person name="Kruger A."/>
            <person name="Kummerfeld S.K."/>
            <person name="Kurochkin I.V."/>
            <person name="Lareau L.F."/>
            <person name="Lazarevic D."/>
            <person name="Lipovich L."/>
            <person name="Liu J."/>
            <person name="Liuni S."/>
            <person name="McWilliam S."/>
            <person name="Madan Babu M."/>
            <person name="Madera M."/>
            <person name="Marchionni L."/>
            <person name="Matsuda H."/>
            <person name="Matsuzawa S."/>
            <person name="Miki H."/>
            <person name="Mignone F."/>
            <person name="Miyake S."/>
            <person name="Morris K."/>
            <person name="Mottagui-Tabar S."/>
            <person name="Mulder N."/>
            <person name="Nakano N."/>
            <person name="Nakauchi H."/>
            <person name="Ng P."/>
            <person name="Nilsson R."/>
            <person name="Nishiguchi S."/>
            <person name="Nishikawa S."/>
            <person name="Nori F."/>
            <person name="Ohara O."/>
            <person name="Okazaki Y."/>
            <person name="Orlando V."/>
            <person name="Pang K.C."/>
            <person name="Pavan W.J."/>
            <person name="Pavesi G."/>
            <person name="Pesole G."/>
            <person name="Petrovsky N."/>
            <person name="Piazza S."/>
            <person name="Reed J."/>
            <person name="Reid J.F."/>
            <person name="Ring B.Z."/>
            <person name="Ringwald M."/>
            <person name="Rost B."/>
            <person name="Ruan Y."/>
            <person name="Salzberg S.L."/>
            <person name="Sandelin A."/>
            <person name="Schneider C."/>
            <person name="Schoenbach C."/>
            <person name="Sekiguchi K."/>
            <person name="Semple C.A."/>
            <person name="Seno S."/>
            <person name="Sessa L."/>
            <person name="Sheng Y."/>
            <person name="Shibata Y."/>
            <person name="Shimada H."/>
            <person name="Shimada K."/>
            <person name="Silva D."/>
            <person name="Sinclair B."/>
            <person name="Sperling S."/>
            <person name="Stupka E."/>
            <person name="Sugiura K."/>
            <person name="Sultana R."/>
            <person name="Takenaka Y."/>
            <person name="Taki K."/>
            <person name="Tammoja K."/>
            <person name="Tan S.L."/>
            <person name="Tang S."/>
            <person name="Taylor M.S."/>
            <person name="Tegner J."/>
            <person name="Teichmann S.A."/>
            <person name="Ueda H.R."/>
            <person name="van Nimwegen E."/>
            <person name="Verardo R."/>
            <person name="Wei C.L."/>
            <person name="Yagi K."/>
            <person name="Yamanishi H."/>
            <person name="Zabarovsky E."/>
            <person name="Zhu S."/>
            <person name="Zimmer A."/>
            <person name="Hide W."/>
            <person name="Bult C."/>
            <person name="Grimmond S.M."/>
            <person name="Teasdale R.D."/>
            <person name="Liu E.T."/>
            <person name="Brusic V."/>
            <person name="Quackenbush J."/>
            <person name="Wahlestedt C."/>
            <person name="Mattick J.S."/>
            <person name="Hume D.A."/>
            <person name="Kai C."/>
            <person name="Sasaki D."/>
            <person name="Tomaru Y."/>
            <person name="Fukuda S."/>
            <person name="Kanamori-Katayama M."/>
            <person name="Suzuki M."/>
            <person name="Aoki J."/>
            <person name="Arakawa T."/>
            <person name="Iida J."/>
            <person name="Imamura K."/>
            <person name="Itoh M."/>
            <person name="Kato T."/>
            <person name="Kawaji H."/>
            <person name="Kawagashira N."/>
            <person name="Kawashima T."/>
            <person name="Kojima M."/>
            <person name="Kondo S."/>
            <person name="Konno H."/>
            <person name="Nakano K."/>
            <person name="Ninomiya N."/>
            <person name="Nishio T."/>
            <person name="Okada M."/>
            <person name="Plessy C."/>
            <person name="Shibata K."/>
            <person name="Shiraki T."/>
            <person name="Suzuki S."/>
            <person name="Tagami M."/>
            <person name="Waki K."/>
            <person name="Watahiki A."/>
            <person name="Okamura-Oho Y."/>
            <person name="Suzuki H."/>
            <person name="Kawai J."/>
            <person name="Hayashizaki Y."/>
        </authorList>
    </citation>
    <scope>NUCLEOTIDE SEQUENCE [LARGE SCALE MRNA] OF 1-809</scope>
    <source>
        <strain>C57BL/6J</strain>
        <tissue>Heart</tissue>
    </source>
</reference>
<reference key="3">
    <citation type="journal article" date="2004" name="Genome Res.">
        <title>The status, quality, and expansion of the NIH full-length cDNA project: the Mammalian Gene Collection (MGC).</title>
        <authorList>
            <consortium name="The MGC Project Team"/>
        </authorList>
    </citation>
    <scope>NUCLEOTIDE SEQUENCE [LARGE SCALE MRNA] OF 629-1199 (ISOFORM 2)</scope>
    <source>
        <tissue>Eye</tissue>
    </source>
</reference>
<reference key="4">
    <citation type="journal article" date="2010" name="Cell">
        <title>A tissue-specific atlas of mouse protein phosphorylation and expression.</title>
        <authorList>
            <person name="Huttlin E.L."/>
            <person name="Jedrychowski M.P."/>
            <person name="Elias J.E."/>
            <person name="Goswami T."/>
            <person name="Rad R."/>
            <person name="Beausoleil S.A."/>
            <person name="Villen J."/>
            <person name="Haas W."/>
            <person name="Sowa M.E."/>
            <person name="Gygi S.P."/>
        </authorList>
    </citation>
    <scope>PHOSPHORYLATION [LARGE SCALE ANALYSIS] AT SER-1026; SER-1049; SER-1054; SER-1058; SER-1070; SER-1093 AND SER-1184</scope>
    <scope>IDENTIFICATION BY MASS SPECTROMETRY [LARGE SCALE ANALYSIS]</scope>
    <source>
        <tissue>Heart</tissue>
        <tissue>Kidney</tissue>
    </source>
</reference>
<reference key="5">
    <citation type="journal article" date="2012" name="Nat. Med.">
        <title>RBM20, a gene for hereditary cardiomyopathy, regulates titin splicing.</title>
        <authorList>
            <person name="Guo W."/>
            <person name="Schafer S."/>
            <person name="Greaser M.L."/>
            <person name="Radke M.H."/>
            <person name="Liss M."/>
            <person name="Govindarajan T."/>
            <person name="Maatz H."/>
            <person name="Schulz H."/>
            <person name="Li S."/>
            <person name="Parrish A.M."/>
            <person name="Dauksaite V."/>
            <person name="Vakeel P."/>
            <person name="Klaassen S."/>
            <person name="Gerull B."/>
            <person name="Thierfelder L."/>
            <person name="Regitz-Zagrosek V."/>
            <person name="Hacker T.A."/>
            <person name="Saupe K.W."/>
            <person name="Dec G.W."/>
            <person name="Ellinor P.T."/>
            <person name="MacRae C.A."/>
            <person name="Spallek B."/>
            <person name="Fischer R."/>
            <person name="Perrot A."/>
            <person name="Ozcelik C."/>
            <person name="Saar K."/>
            <person name="Hubner N."/>
            <person name="Gotthardt M."/>
        </authorList>
    </citation>
    <scope>FUNCTION</scope>
    <scope>RNA-BINDING</scope>
    <scope>SUBCELLULAR LOCATION</scope>
    <scope>TISSUE SPECIFICITY</scope>
</reference>
<reference key="6">
    <citation type="journal article" date="2013" name="FEBS Lett.">
        <title>Identification of nuclear retention domains in the RBM20 protein.</title>
        <authorList>
            <person name="Filippello A."/>
            <person name="Lorenzi P."/>
            <person name="Bergamo E."/>
            <person name="Romanelli M.G."/>
        </authorList>
    </citation>
    <scope>SUBCELLULAR LOCATION</scope>
    <scope>TISSUE SPECIFICITY</scope>
</reference>
<reference key="7">
    <citation type="journal article" date="2014" name="Hum. Mol. Genet.">
        <title>Rbm20-deficient cardiogenesis reveals early disruption of RNA processing and sarcomere remodeling establishing a developmental etiology for dilated cardiomyopathy.</title>
        <authorList>
            <person name="Beraldi R."/>
            <person name="Li X."/>
            <person name="Martinez Fernandez A."/>
            <person name="Reyes S."/>
            <person name="Secreto F."/>
            <person name="Terzic A."/>
            <person name="Olson T.M."/>
            <person name="Nelson T.J."/>
        </authorList>
    </citation>
    <scope>FUNCTION</scope>
    <scope>INDUCTION</scope>
</reference>
<reference key="8">
    <citation type="journal article" date="2016" name="Circulation">
        <title>Experimentally increasing the compliance of titin through RNA binding motif-20 (RBM20) inhibition improves diastolic function in a mouse model of heart failure with preserved ejection fraction.</title>
        <authorList>
            <person name="Methawasin M."/>
            <person name="Strom J.G."/>
            <person name="Slater R.E."/>
            <person name="Fernandez V."/>
            <person name="Saripalli C."/>
            <person name="Granzier H."/>
        </authorList>
    </citation>
    <scope>FUNCTION</scope>
</reference>
<reference key="9">
    <citation type="journal article" date="2018" name="Circulation">
        <title>RBM20 Mutations Induce an Arrhythmogenic Dilated Cardiomyopathy Related to Disturbed Calcium Handling.</title>
        <authorList>
            <person name="van den Hoogenhof M.M.G."/>
            <person name="Beqqali A."/>
            <person name="Amin A.S."/>
            <person name="van der Made I."/>
            <person name="Aufiero S."/>
            <person name="Khan M.A.F."/>
            <person name="Schumacher C.A."/>
            <person name="Jansweijer J.A."/>
            <person name="van Spaendonck-Zwarts K.Y."/>
            <person name="Remme C.A."/>
            <person name="Backs J."/>
            <person name="Verkerk A.O."/>
            <person name="Baartscheer A."/>
            <person name="Pinto Y.M."/>
            <person name="Creemers E.E."/>
        </authorList>
    </citation>
    <scope>FUNCTION</scope>
    <scope>DISRUPTION PHENOTYPE</scope>
</reference>
<reference key="10">
    <citation type="journal article" date="2018" name="Sci. Rep.">
        <title>Phosphorylation of the RSRSP stretch is critical for splicing regulation by RNA-Binding Motif Protein 20 (RBM20) through nuclear localization.</title>
        <authorList>
            <person name="Murayama R."/>
            <person name="Kimura-Asami M."/>
            <person name="Togo-Ohno M."/>
            <person name="Yamasaki-Kato Y."/>
            <person name="Naruse T.K."/>
            <person name="Yamamoto T."/>
            <person name="Hayashi T."/>
            <person name="Ai T."/>
            <person name="Spoonamore K.G."/>
            <person name="Kovacs R.J."/>
            <person name="Vatta M."/>
            <person name="Iizuka M."/>
            <person name="Saito M."/>
            <person name="Wani S."/>
            <person name="Hiraoka Y."/>
            <person name="Kimura A."/>
            <person name="Kuroyanagi H."/>
        </authorList>
    </citation>
    <scope>FUNCTION</scope>
    <scope>SUBCELLULAR LOCATION</scope>
    <scope>PHOSPHORYLATION AT SER-637 AND SER-639</scope>
    <scope>MUTAGENESIS OF ARG-636; 637-SER--SER-639; SER-637 AND SER-639</scope>
</reference>
<reference key="11">
    <citation type="journal article" date="2020" name="Sci. Rep.">
        <title>A missense mutation in the RSRSP stretch of Rbm20 causes dilated cardiomyopathy and atrial fibrillation in mice.</title>
        <authorList>
            <person name="Ihara K."/>
            <person name="Sasano T."/>
            <person name="Hiraoka Y."/>
            <person name="Togo-Ohno M."/>
            <person name="Soejima Y."/>
            <person name="Sawabe M."/>
            <person name="Tsuchiya M."/>
            <person name="Ogawa H."/>
            <person name="Furukawa T."/>
            <person name="Kuroyanagi H."/>
        </authorList>
    </citation>
    <scope>FUNCTION</scope>
    <scope>SUBCELLULAR LOCATION</scope>
    <scope>MUTAGENESIS OF SER-637</scope>
</reference>
<reference key="12">
    <citation type="journal article" date="2022" name="FASEB J.">
        <title>RBM20 phosphorylation and its role in nucleocytoplasmic transport and cardiac pathogenesis.</title>
        <authorList>
            <person name="Zhang Y."/>
            <person name="Wang C."/>
            <person name="Sun M."/>
            <person name="Jin Y."/>
            <person name="Braz C.U."/>
            <person name="Khatib H."/>
            <person name="Hacker T.A."/>
            <person name="Liss M."/>
            <person name="Gotthardt M."/>
            <person name="Granzier H."/>
            <person name="Ge Y."/>
            <person name="Guo W."/>
        </authorList>
    </citation>
    <scope>FUNCTION</scope>
    <scope>SUBCELLULAR LOCATION</scope>
    <scope>PHOSPHORYLATION AT SER-637</scope>
    <scope>MUTAGENESIS OF SER-637</scope>
</reference>
<reference key="13">
    <citation type="journal article" date="2022" name="J. Mol. Cell. Cardiol.">
        <title>RBM20S639G mutation is a high genetic risk factor for premature death through RNA-protein condensates.</title>
        <authorList>
            <person name="Wang C."/>
            <person name="Zhang Y."/>
            <person name="Methawasin M."/>
            <person name="Braz C.U."/>
            <person name="Gao-Hu J."/>
            <person name="Yang B."/>
            <person name="Strom J."/>
            <person name="Gohlke J."/>
            <person name="Hacker T."/>
            <person name="Khatib H."/>
            <person name="Granzier H."/>
            <person name="Guo W."/>
        </authorList>
    </citation>
    <scope>FUNCTION</scope>
    <scope>SUBCELLULAR LOCATION</scope>
    <scope>MUTAGENESIS OF SER-639</scope>
</reference>
<reference key="14">
    <citation type="journal article" date="2023" name="J. Cell Sci.">
        <title>Quaking regulates circular RNA production in cardiomyocytes.</title>
        <authorList>
            <person name="Montanes-Agudo P."/>
            <person name="van der Made I."/>
            <person name="Aufiero S."/>
            <person name="Tijsen A.J."/>
            <person name="Pinto Y.M."/>
            <person name="Creemers E.E."/>
        </authorList>
    </citation>
    <scope>FUNCTION</scope>
</reference>
<reference evidence="22 23" key="15">
    <citation type="journal article" date="2020" name="Nucleic Acids Res.">
        <title>Structural basis of UCUU RNA motif recognition by splicing factor RBM20.</title>
        <authorList>
            <person name="Upadhyay S.K."/>
            <person name="Mackereth C.D."/>
        </authorList>
    </citation>
    <scope>STRUCTURE BY NMR OF 513-621 IN COMPLEX WITH RNA</scope>
    <scope>FUNCTION</scope>
    <scope>MUTAGENESIS OF HIS-523; ASN-526; VAL-537; GLN-558; PHE-560; GLN-577; ARG-591; ARG-595 AND TYR-596</scope>
</reference>
<proteinExistence type="evidence at protein level"/>
<keyword id="KW-0002">3D-structure</keyword>
<keyword id="KW-0025">Alternative splicing</keyword>
<keyword id="KW-0963">Cytoplasm</keyword>
<keyword id="KW-0479">Metal-binding</keyword>
<keyword id="KW-0507">mRNA processing</keyword>
<keyword id="KW-0508">mRNA splicing</keyword>
<keyword id="KW-0539">Nucleus</keyword>
<keyword id="KW-0597">Phosphoprotein</keyword>
<keyword id="KW-1185">Reference proteome</keyword>
<keyword id="KW-0694">RNA-binding</keyword>
<keyword id="KW-0862">Zinc</keyword>
<keyword id="KW-0863">Zinc-finger</keyword>
<evidence type="ECO:0000250" key="1">
    <source>
        <dbReference type="UniProtKB" id="E9PT37"/>
    </source>
</evidence>
<evidence type="ECO:0000250" key="2">
    <source>
        <dbReference type="UniProtKB" id="Q5T481"/>
    </source>
</evidence>
<evidence type="ECO:0000255" key="3"/>
<evidence type="ECO:0000255" key="4">
    <source>
        <dbReference type="PROSITE-ProRule" id="PRU00130"/>
    </source>
</evidence>
<evidence type="ECO:0000255" key="5">
    <source>
        <dbReference type="PROSITE-ProRule" id="PRU00176"/>
    </source>
</evidence>
<evidence type="ECO:0000256" key="6">
    <source>
        <dbReference type="SAM" id="MobiDB-lite"/>
    </source>
</evidence>
<evidence type="ECO:0000269" key="7">
    <source>
    </source>
</evidence>
<evidence type="ECO:0000269" key="8">
    <source>
    </source>
</evidence>
<evidence type="ECO:0000269" key="9">
    <source>
    </source>
</evidence>
<evidence type="ECO:0000269" key="10">
    <source>
    </source>
</evidence>
<evidence type="ECO:0000269" key="11">
    <source>
    </source>
</evidence>
<evidence type="ECO:0000269" key="12">
    <source>
    </source>
</evidence>
<evidence type="ECO:0000269" key="13">
    <source>
    </source>
</evidence>
<evidence type="ECO:0000269" key="14">
    <source>
    </source>
</evidence>
<evidence type="ECO:0000269" key="15">
    <source>
    </source>
</evidence>
<evidence type="ECO:0000269" key="16">
    <source>
    </source>
</evidence>
<evidence type="ECO:0000269" key="17">
    <source>
    </source>
</evidence>
<evidence type="ECO:0000303" key="18">
    <source>
    </source>
</evidence>
<evidence type="ECO:0000303" key="19">
    <source>
    </source>
</evidence>
<evidence type="ECO:0000305" key="20"/>
<evidence type="ECO:0000312" key="21">
    <source>
        <dbReference type="MGI" id="MGI:1920963"/>
    </source>
</evidence>
<evidence type="ECO:0007744" key="22">
    <source>
        <dbReference type="PDB" id="6SO9"/>
    </source>
</evidence>
<evidence type="ECO:0007744" key="23">
    <source>
        <dbReference type="PDB" id="6SOE"/>
    </source>
</evidence>
<evidence type="ECO:0007744" key="24">
    <source>
    </source>
</evidence>
<evidence type="ECO:0007829" key="25">
    <source>
        <dbReference type="PDB" id="6SO9"/>
    </source>
</evidence>
<evidence type="ECO:0007829" key="26">
    <source>
        <dbReference type="PDB" id="6SOE"/>
    </source>
</evidence>
<feature type="chain" id="PRO_0000328825" description="RNA-binding protein 20">
    <location>
        <begin position="1"/>
        <end position="1199"/>
    </location>
</feature>
<feature type="domain" description="RRM" evidence="5">
    <location>
        <begin position="520"/>
        <end position="595"/>
    </location>
</feature>
<feature type="zinc finger region" description="U1-type" evidence="3">
    <location>
        <begin position="410"/>
        <end position="444"/>
    </location>
</feature>
<feature type="zinc finger region" description="Matrin-type" evidence="4">
    <location>
        <begin position="1133"/>
        <end position="1164"/>
    </location>
</feature>
<feature type="region of interest" description="Disordered" evidence="6">
    <location>
        <begin position="1"/>
        <end position="55"/>
    </location>
</feature>
<feature type="region of interest" description="Disordered" evidence="6">
    <location>
        <begin position="163"/>
        <end position="186"/>
    </location>
</feature>
<feature type="region of interest" description="Disordered" evidence="6">
    <location>
        <begin position="320"/>
        <end position="346"/>
    </location>
</feature>
<feature type="region of interest" description="Disordered" evidence="6">
    <location>
        <begin position="626"/>
        <end position="685"/>
    </location>
</feature>
<feature type="region of interest" description="RS" evidence="2">
    <location>
        <begin position="630"/>
        <end position="649"/>
    </location>
</feature>
<feature type="region of interest" description="Disordered" evidence="6">
    <location>
        <begin position="720"/>
        <end position="884"/>
    </location>
</feature>
<feature type="region of interest" description="Disordered" evidence="6">
    <location>
        <begin position="944"/>
        <end position="1077"/>
    </location>
</feature>
<feature type="region of interest" description="Disordered" evidence="6">
    <location>
        <begin position="1172"/>
        <end position="1199"/>
    </location>
</feature>
<feature type="compositionally biased region" description="Low complexity" evidence="6">
    <location>
        <begin position="25"/>
        <end position="42"/>
    </location>
</feature>
<feature type="compositionally biased region" description="Pro residues" evidence="6">
    <location>
        <begin position="43"/>
        <end position="52"/>
    </location>
</feature>
<feature type="compositionally biased region" description="Low complexity" evidence="6">
    <location>
        <begin position="170"/>
        <end position="183"/>
    </location>
</feature>
<feature type="compositionally biased region" description="Basic and acidic residues" evidence="6">
    <location>
        <begin position="626"/>
        <end position="636"/>
    </location>
</feature>
<feature type="compositionally biased region" description="Low complexity" evidence="6">
    <location>
        <begin position="638"/>
        <end position="649"/>
    </location>
</feature>
<feature type="compositionally biased region" description="Basic and acidic residues" evidence="6">
    <location>
        <begin position="667"/>
        <end position="685"/>
    </location>
</feature>
<feature type="compositionally biased region" description="Basic and acidic residues" evidence="6">
    <location>
        <begin position="739"/>
        <end position="758"/>
    </location>
</feature>
<feature type="compositionally biased region" description="Basic and acidic residues" evidence="6">
    <location>
        <begin position="770"/>
        <end position="831"/>
    </location>
</feature>
<feature type="compositionally biased region" description="Basic and acidic residues" evidence="6">
    <location>
        <begin position="859"/>
        <end position="868"/>
    </location>
</feature>
<feature type="compositionally biased region" description="Polar residues" evidence="6">
    <location>
        <begin position="962"/>
        <end position="971"/>
    </location>
</feature>
<feature type="compositionally biased region" description="Basic and acidic residues" evidence="6">
    <location>
        <begin position="1042"/>
        <end position="1055"/>
    </location>
</feature>
<feature type="compositionally biased region" description="Polar residues" evidence="6">
    <location>
        <begin position="1067"/>
        <end position="1077"/>
    </location>
</feature>
<feature type="modified residue" description="Phosphoserine" evidence="12 16">
    <location>
        <position position="637"/>
    </location>
</feature>
<feature type="modified residue" description="Phosphoserine" evidence="12">
    <location>
        <position position="639"/>
    </location>
</feature>
<feature type="modified residue" description="Phosphoserine" evidence="1">
    <location>
        <position position="642"/>
    </location>
</feature>
<feature type="modified residue" description="Phosphoserine" evidence="1">
    <location>
        <position position="644"/>
    </location>
</feature>
<feature type="modified residue" description="Phosphoserine" evidence="1">
    <location>
        <position position="651"/>
    </location>
</feature>
<feature type="modified residue" description="Phosphoserine" evidence="1">
    <location>
        <position position="728"/>
    </location>
</feature>
<feature type="modified residue" description="Phosphoserine" evidence="2">
    <location>
        <position position="787"/>
    </location>
</feature>
<feature type="modified residue" description="Phosphoserine" evidence="1">
    <location>
        <position position="871"/>
    </location>
</feature>
<feature type="modified residue" description="Phosphoserine" evidence="1">
    <location>
        <position position="873"/>
    </location>
</feature>
<feature type="modified residue" description="Phosphoserine" evidence="1">
    <location>
        <position position="955"/>
    </location>
</feature>
<feature type="modified residue" description="Phosphoserine" evidence="1">
    <location>
        <position position="991"/>
    </location>
</feature>
<feature type="modified residue" description="Phosphoserine" evidence="24">
    <location>
        <position position="1026"/>
    </location>
</feature>
<feature type="modified residue" description="Phosphoserine" evidence="2">
    <location>
        <position position="1038"/>
    </location>
</feature>
<feature type="modified residue" description="Phosphoserine" evidence="24">
    <location>
        <position position="1049"/>
    </location>
</feature>
<feature type="modified residue" description="Phosphoserine" evidence="24">
    <location>
        <position position="1054"/>
    </location>
</feature>
<feature type="modified residue" description="Phosphoserine" evidence="24">
    <location>
        <position position="1058"/>
    </location>
</feature>
<feature type="modified residue" description="Phosphoserine" evidence="24">
    <location>
        <position position="1070"/>
    </location>
</feature>
<feature type="modified residue" description="Phosphoserine" evidence="1">
    <location>
        <position position="1088"/>
    </location>
</feature>
<feature type="modified residue" description="Phosphoserine" evidence="24">
    <location>
        <position position="1093"/>
    </location>
</feature>
<feature type="modified residue" description="Phosphoserine" evidence="1">
    <location>
        <position position="1182"/>
    </location>
</feature>
<feature type="modified residue" description="Phosphoserine" evidence="24">
    <location>
        <position position="1184"/>
    </location>
</feature>
<feature type="splice variant" id="VSP_044393" description="In isoform 2." evidence="18">
    <original>ENPRYMEVKSLNVRSPEFTEAELKEPLSLPSWEPEVFSELSIPLGVEFVVPRTGFYCKLCGLFYTSEEAAKVSHCRSTVHYRNLQKYLSQLAEEGLKETEGTDSPSPERGGIGPHLERKKL</original>
    <variation>GSDSGAGLIPETPYWRKPQVHGSEISEREIARIHRSGAERAPFFAFLGTGGVQ</variation>
    <location>
        <begin position="1079"/>
        <end position="1199"/>
    </location>
</feature>
<feature type="mutagenesis site" description="Strongly reduced pre-mRNA-binding." evidence="13">
    <original>H</original>
    <variation>A</variation>
    <location>
        <position position="523"/>
    </location>
</feature>
<feature type="mutagenesis site" description="Slightly reduced pre-mRNA-binding." evidence="13">
    <original>N</original>
    <variation>A</variation>
    <location>
        <position position="526"/>
    </location>
</feature>
<feature type="mutagenesis site" description="Slightly reduced pre-mRNA-binding." evidence="13">
    <original>V</original>
    <variation>I</variation>
    <location>
        <position position="537"/>
    </location>
</feature>
<feature type="mutagenesis site" description="Does not affect pre-mRNA-binding." evidence="13">
    <original>Q</original>
    <variation>A</variation>
    <location>
        <position position="558"/>
    </location>
</feature>
<feature type="mutagenesis site" description="Strongly reduced pre-mRNA-binding." evidence="13">
    <original>F</original>
    <variation>A</variation>
    <location>
        <position position="560"/>
    </location>
</feature>
<feature type="mutagenesis site" description="Does not affect pre-mRNA-binding." evidence="13">
    <original>Q</original>
    <variation>A</variation>
    <location>
        <position position="577"/>
    </location>
</feature>
<feature type="mutagenesis site" description="Slightly reduced pre-mRNA-binding." evidence="13">
    <original>R</original>
    <variation>M</variation>
    <location>
        <position position="591"/>
    </location>
</feature>
<feature type="mutagenesis site" description="Strongly reduced pre-mRNA-binding." evidence="13">
    <original>R</original>
    <variation>M</variation>
    <location>
        <position position="595"/>
    </location>
</feature>
<feature type="mutagenesis site" description="Strongly reduced pre-mRNA-binding." evidence="13">
    <original>Y</original>
    <variation>A</variation>
    <location>
        <position position="596"/>
    </location>
</feature>
<feature type="mutagenesis site" description="Impaired ability to regulate alternative splicing of Ttn (Titin) mRNAs." evidence="12">
    <original>R</original>
    <variation>W</variation>
    <location>
        <position position="636"/>
    </location>
</feature>
<feature type="mutagenesis site" description="Abolished localization to the nucleus, leading to impaired ability to regulate alternative splicing of Ttn (Titin) mRNAs." evidence="12">
    <original>SRS</original>
    <variation>ARA</variation>
    <location>
        <begin position="637"/>
        <end position="639"/>
    </location>
</feature>
<feature type="mutagenesis site" description="Knockin mice show severe cardiac phenotypes, characterized by dilated cardiomyopathy and atrial fibrillation. Decreased localization to the nucleus, leading to impaired ability to regulate alternative splicing of Ttn (Titin) mRNAs." evidence="12 14 16">
    <original>S</original>
    <variation>A</variation>
    <location>
        <position position="637"/>
    </location>
</feature>
<feature type="mutagenesis site" description="Decreased localization to the nucleus, leading to impaired ability to regulate alternative splicing of Ttn (Titin) mRNAs." evidence="12">
    <original>S</original>
    <variation>A</variation>
    <location>
        <position position="639"/>
    </location>
</feature>
<feature type="mutagenesis site" description="Knockin mice show severe cardiac phenotypes, characterized by dilated cardiomyopathy, leading to premature death. Decreased localization to the nucleus associated with an increased localization to cytoplasmic ribonucleoprotein granules." evidence="15">
    <original>S</original>
    <variation>G</variation>
    <location>
        <position position="639"/>
    </location>
</feature>
<feature type="sequence conflict" description="In Ref. 2; BAE24961." evidence="20" ref="2">
    <original>Q</original>
    <variation>K</variation>
    <location>
        <position position="77"/>
    </location>
</feature>
<feature type="strand" evidence="25">
    <location>
        <begin position="517"/>
        <end position="519"/>
    </location>
</feature>
<feature type="strand" evidence="25">
    <location>
        <begin position="522"/>
        <end position="525"/>
    </location>
</feature>
<feature type="turn" evidence="26">
    <location>
        <begin position="529"/>
        <end position="531"/>
    </location>
</feature>
<feature type="helix" evidence="25">
    <location>
        <begin position="534"/>
        <end position="544"/>
    </location>
</feature>
<feature type="strand" evidence="25">
    <location>
        <begin position="547"/>
        <end position="553"/>
    </location>
</feature>
<feature type="turn" evidence="25">
    <location>
        <begin position="554"/>
        <end position="557"/>
    </location>
</feature>
<feature type="strand" evidence="25">
    <location>
        <begin position="558"/>
        <end position="565"/>
    </location>
</feature>
<feature type="helix" evidence="25">
    <location>
        <begin position="566"/>
        <end position="578"/>
    </location>
</feature>
<feature type="strand" evidence="25">
    <location>
        <begin position="581"/>
        <end position="583"/>
    </location>
</feature>
<feature type="strand" evidence="25">
    <location>
        <begin position="586"/>
        <end position="592"/>
    </location>
</feature>
<feature type="helix" evidence="25">
    <location>
        <begin position="608"/>
        <end position="617"/>
    </location>
</feature>
<gene>
    <name evidence="19 21" type="primary">Rbm20</name>
</gene>
<accession>Q3UQS8</accession>
<accession>E9PVK0</accession>
<accession>Q8CFS9</accession>
<organism>
    <name type="scientific">Mus musculus</name>
    <name type="common">Mouse</name>
    <dbReference type="NCBI Taxonomy" id="10090"/>
    <lineage>
        <taxon>Eukaryota</taxon>
        <taxon>Metazoa</taxon>
        <taxon>Chordata</taxon>
        <taxon>Craniata</taxon>
        <taxon>Vertebrata</taxon>
        <taxon>Euteleostomi</taxon>
        <taxon>Mammalia</taxon>
        <taxon>Eutheria</taxon>
        <taxon>Euarchontoglires</taxon>
        <taxon>Glires</taxon>
        <taxon>Rodentia</taxon>
        <taxon>Myomorpha</taxon>
        <taxon>Muroidea</taxon>
        <taxon>Muridae</taxon>
        <taxon>Murinae</taxon>
        <taxon>Mus</taxon>
        <taxon>Mus</taxon>
    </lineage>
</organism>
<name>RBM20_MOUSE</name>
<sequence length="1199" mass="130124">MVLAVAMSQDADPSGPEQPDRDACVMPGVQGPSVPQGQQGMQPLPPPPPPQPQASLPQIIQNAAKLLDKSPFSVNNQNPLLTSPASVQLAQIQAQLTLHRLKMAQTAVTNNTAAATVLNQVLSKVAMSQPLFNQLRHPSVLGTAHGPTGVSQHAASVPSAHFPSTAIAFSPPSQTGGPGPSVSLPSQPPNAMVVHTFSGVVPQTPAQPAVILSLGKAGPTPATTGFYDYGKANSGQAYGSETEGQPGFLPASASATASGSMTYEGHYSHTGQDGQPAFSKDFYGPNAQGPHIAGGFPADQTGSMKGDVGGLLQGTNSQWERPPGFSGQNKPDITAGPSLWAPPASQPYELYDPEEPTSDRAPPAFGSRLNNSKQGFGCSCRRTKEGQAVLSVRPLQGHQLNDFRGLAPLHLPHICSICDKKVFDLKDWELHVKGKLHAQKCLLFSESAGLRSIRASGEGTLSASANSTAVYNPTGNEDYTSNLGTSYAAIPTRAFAQSNPVFPSASSGTSFAAQRKGAGRVVHICNLPEGSCTENDVINLGLPFGKVTNYILMKSTNQAFLEMAYTEAAQAMVQYYQEKPAIINGEKLLIRMSTRYKELQLKKPGKNVAAIIQDIHSQRERDMLREADRYGPERPRSRSPMSRSLSPRSHSPPGPSRADWGNGRDSYAWRDEDRETVPRRENGEDKRDRLDVWAHDRKHYPRQLDKAELDERLEGGRGYREKYLKSGSPGPLHSVSGYKGREDGYHRKEPKAKLDKYPKQQPDVPGRSRRKEEARLREPRHPHPEDSGKAEDLEPKITRAPDGTKSKQSEKSKTKRADRDQEGADDKKESQLAENEAGAEEQEGMVGIQQEGTESCDPENTRTKKGQDCDSGSEPEGDNWYPTNMEELVTVDEVGEEDFIMEPDLPELEEIVPIDQKDKTLPKICTCVTATLGLDLAKDFTKQGETLGNGDAELSLKLPGQVPSTSASCPNDTDLEMPGLNLDAERKPAESETGLSLEVSNCYEKEARGEEDSDVSLAPAVQQMSSPQPADERARQSSPFLDDCKARGSPEDGSHEASPLEGKASPPTESDLQSQACRENPRYMEVKSLNVRSPEFTEAELKEPLSLPSWEPEVFSELSIPLGVEFVVPRTGFYCKLCGLFYTSEEAAKVSHCRSTVHYRNLQKYLSQLAEEGLKETEGTDSPSPERGGIGPHLERKKL</sequence>
<dbReference type="EMBL" id="AC117805">
    <property type="status" value="NOT_ANNOTATED_CDS"/>
    <property type="molecule type" value="Genomic_DNA"/>
</dbReference>
<dbReference type="EMBL" id="AC121510">
    <property type="status" value="NOT_ANNOTATED_CDS"/>
    <property type="molecule type" value="Genomic_DNA"/>
</dbReference>
<dbReference type="EMBL" id="AC137853">
    <property type="status" value="NOT_ANNOTATED_CDS"/>
    <property type="molecule type" value="Genomic_DNA"/>
</dbReference>
<dbReference type="EMBL" id="AK142175">
    <property type="protein sequence ID" value="BAE24961.1"/>
    <property type="molecule type" value="mRNA"/>
</dbReference>
<dbReference type="EMBL" id="BC038663">
    <property type="protein sequence ID" value="AAH38663.1"/>
    <property type="status" value="ALT_INIT"/>
    <property type="molecule type" value="mRNA"/>
</dbReference>
<dbReference type="CCDS" id="CCDS50468.1">
    <molecule id="Q3UQS8-1"/>
</dbReference>
<dbReference type="RefSeq" id="NP_001164318.1">
    <molecule id="Q3UQS8-1"/>
    <property type="nucleotide sequence ID" value="NM_001170847.1"/>
</dbReference>
<dbReference type="PDB" id="6SO9">
    <property type="method" value="NMR"/>
    <property type="chains" value="A=513-621"/>
</dbReference>
<dbReference type="PDB" id="6SOE">
    <property type="method" value="NMR"/>
    <property type="chains" value="A=513-621"/>
</dbReference>
<dbReference type="PDBsum" id="6SO9"/>
<dbReference type="PDBsum" id="6SOE"/>
<dbReference type="SMR" id="Q3UQS8"/>
<dbReference type="BioGRID" id="216206">
    <property type="interactions" value="1"/>
</dbReference>
<dbReference type="FunCoup" id="Q3UQS8">
    <property type="interactions" value="1160"/>
</dbReference>
<dbReference type="STRING" id="10090.ENSMUSP00000129447"/>
<dbReference type="GlyGen" id="Q3UQS8">
    <property type="glycosylation" value="1 site"/>
</dbReference>
<dbReference type="iPTMnet" id="Q3UQS8"/>
<dbReference type="PhosphoSitePlus" id="Q3UQS8"/>
<dbReference type="PaxDb" id="10090-ENSMUSP00000129447"/>
<dbReference type="ProteomicsDB" id="300259">
    <molecule id="Q3UQS8-1"/>
</dbReference>
<dbReference type="ProteomicsDB" id="300260">
    <molecule id="Q3UQS8-2"/>
</dbReference>
<dbReference type="Antibodypedia" id="50051">
    <property type="antibodies" value="98 antibodies from 21 providers"/>
</dbReference>
<dbReference type="DNASU" id="73713"/>
<dbReference type="Ensembl" id="ENSMUST00000164202.9">
    <molecule id="Q3UQS8-1"/>
    <property type="protein sequence ID" value="ENSMUSP00000129447.2"/>
    <property type="gene ID" value="ENSMUSG00000043639.16"/>
</dbReference>
<dbReference type="GeneID" id="73713"/>
<dbReference type="KEGG" id="mmu:73713"/>
<dbReference type="UCSC" id="uc008hwz.2">
    <molecule id="Q3UQS8-1"/>
    <property type="organism name" value="mouse"/>
</dbReference>
<dbReference type="AGR" id="MGI:1920963"/>
<dbReference type="CTD" id="282996"/>
<dbReference type="MGI" id="MGI:1920963">
    <property type="gene designation" value="Rbm20"/>
</dbReference>
<dbReference type="VEuPathDB" id="HostDB:ENSMUSG00000043639"/>
<dbReference type="eggNOG" id="ENOG502QW62">
    <property type="taxonomic scope" value="Eukaryota"/>
</dbReference>
<dbReference type="GeneTree" id="ENSGT01030000234642"/>
<dbReference type="InParanoid" id="Q3UQS8"/>
<dbReference type="OMA" id="PTRADWG"/>
<dbReference type="OrthoDB" id="8949749at2759"/>
<dbReference type="PhylomeDB" id="Q3UQS8"/>
<dbReference type="TreeFam" id="TF333921"/>
<dbReference type="BioGRID-ORCS" id="73713">
    <property type="hits" value="1 hit in 78 CRISPR screens"/>
</dbReference>
<dbReference type="ChiTaRS" id="Rbm20">
    <property type="organism name" value="mouse"/>
</dbReference>
<dbReference type="PRO" id="PR:Q3UQS8"/>
<dbReference type="Proteomes" id="UP000000589">
    <property type="component" value="Chromosome 19"/>
</dbReference>
<dbReference type="RNAct" id="Q3UQS8">
    <property type="molecule type" value="protein"/>
</dbReference>
<dbReference type="Bgee" id="ENSMUSG00000043639">
    <property type="expression patterns" value="Expressed in interventricular septum and 160 other cell types or tissues"/>
</dbReference>
<dbReference type="ExpressionAtlas" id="Q3UQS8">
    <property type="expression patterns" value="baseline and differential"/>
</dbReference>
<dbReference type="GO" id="GO:0036464">
    <property type="term" value="C:cytoplasmic ribonucleoprotein granule"/>
    <property type="evidence" value="ECO:0000314"/>
    <property type="project" value="UniProtKB"/>
</dbReference>
<dbReference type="GO" id="GO:0005634">
    <property type="term" value="C:nucleus"/>
    <property type="evidence" value="ECO:0000314"/>
    <property type="project" value="UniProtKB"/>
</dbReference>
<dbReference type="GO" id="GO:0097157">
    <property type="term" value="F:pre-mRNA intronic binding"/>
    <property type="evidence" value="ECO:0000314"/>
    <property type="project" value="UniProtKB"/>
</dbReference>
<dbReference type="GO" id="GO:0003723">
    <property type="term" value="F:RNA binding"/>
    <property type="evidence" value="ECO:0000314"/>
    <property type="project" value="UniProtKB"/>
</dbReference>
<dbReference type="GO" id="GO:1990935">
    <property type="term" value="F:splicing factor binding"/>
    <property type="evidence" value="ECO:0000250"/>
    <property type="project" value="UniProtKB"/>
</dbReference>
<dbReference type="GO" id="GO:0008270">
    <property type="term" value="F:zinc ion binding"/>
    <property type="evidence" value="ECO:0007669"/>
    <property type="project" value="UniProtKB-KW"/>
</dbReference>
<dbReference type="GO" id="GO:0060914">
    <property type="term" value="P:heart formation"/>
    <property type="evidence" value="ECO:0000315"/>
    <property type="project" value="UniProtKB"/>
</dbReference>
<dbReference type="GO" id="GO:0048025">
    <property type="term" value="P:negative regulation of mRNA splicing, via spliceosome"/>
    <property type="evidence" value="ECO:0000315"/>
    <property type="project" value="UniProtKB"/>
</dbReference>
<dbReference type="GO" id="GO:0033120">
    <property type="term" value="P:positive regulation of RNA splicing"/>
    <property type="evidence" value="ECO:0000315"/>
    <property type="project" value="UniProtKB"/>
</dbReference>
<dbReference type="GO" id="GO:0000381">
    <property type="term" value="P:regulation of alternative mRNA splicing, via spliceosome"/>
    <property type="evidence" value="ECO:0007669"/>
    <property type="project" value="Ensembl"/>
</dbReference>
<dbReference type="GO" id="GO:0160091">
    <property type="term" value="P:spliceosome-depend formation of circular RNA"/>
    <property type="evidence" value="ECO:0000314"/>
    <property type="project" value="UniProtKB"/>
</dbReference>
<dbReference type="CDD" id="cd12685">
    <property type="entry name" value="RRM_RBM20"/>
    <property type="match status" value="1"/>
</dbReference>
<dbReference type="FunFam" id="3.30.70.330:FF:000270">
    <property type="entry name" value="RNA binding motif protein 20"/>
    <property type="match status" value="1"/>
</dbReference>
<dbReference type="Gene3D" id="3.30.70.330">
    <property type="match status" value="1"/>
</dbReference>
<dbReference type="InterPro" id="IPR000690">
    <property type="entry name" value="Matrin/U1-C_Znf_C2H2"/>
</dbReference>
<dbReference type="InterPro" id="IPR003604">
    <property type="entry name" value="Matrin/U1-like-C_Znf_C2H2"/>
</dbReference>
<dbReference type="InterPro" id="IPR012677">
    <property type="entry name" value="Nucleotide-bd_a/b_plait_sf"/>
</dbReference>
<dbReference type="InterPro" id="IPR035979">
    <property type="entry name" value="RBD_domain_sf"/>
</dbReference>
<dbReference type="InterPro" id="IPR034790">
    <property type="entry name" value="RBM20_RRM"/>
</dbReference>
<dbReference type="InterPro" id="IPR000504">
    <property type="entry name" value="RRM_dom"/>
</dbReference>
<dbReference type="PANTHER" id="PTHR15592">
    <property type="entry name" value="MATRIN 3/NUCLEAR PROTEIN 220-RELATED"/>
    <property type="match status" value="1"/>
</dbReference>
<dbReference type="SMART" id="SM00360">
    <property type="entry name" value="RRM"/>
    <property type="match status" value="1"/>
</dbReference>
<dbReference type="SMART" id="SM00451">
    <property type="entry name" value="ZnF_U1"/>
    <property type="match status" value="2"/>
</dbReference>
<dbReference type="SUPFAM" id="SSF54928">
    <property type="entry name" value="RNA-binding domain, RBD"/>
    <property type="match status" value="1"/>
</dbReference>
<dbReference type="PROSITE" id="PS50102">
    <property type="entry name" value="RRM"/>
    <property type="match status" value="1"/>
</dbReference>
<dbReference type="PROSITE" id="PS50171">
    <property type="entry name" value="ZF_MATRIN"/>
    <property type="match status" value="1"/>
</dbReference>
<protein>
    <recommendedName>
        <fullName evidence="20">RNA-binding protein 20</fullName>
    </recommendedName>
    <alternativeName>
        <fullName evidence="20">RNA-binding motif protein 20</fullName>
    </alternativeName>
</protein>